<proteinExistence type="inferred from homology"/>
<feature type="chain" id="PRO_0000092104" description="Energy-coupling factor transporter ATP-binding protein EcfA">
    <location>
        <begin position="1"/>
        <end position="279"/>
    </location>
</feature>
<feature type="domain" description="ABC transporter" evidence="1">
    <location>
        <begin position="5"/>
        <end position="240"/>
    </location>
</feature>
<feature type="binding site" evidence="1">
    <location>
        <begin position="40"/>
        <end position="47"/>
    </location>
    <ligand>
        <name>ATP</name>
        <dbReference type="ChEBI" id="CHEBI:30616"/>
    </ligand>
</feature>
<reference key="1">
    <citation type="journal article" date="1998" name="J. Bacteriol.">
        <title>Molecular analysis of the capsule gene region of group A Streptococcus: the hasAB genes are sufficient for capsule expression.</title>
        <authorList>
            <person name="Ashbaugh C.D."/>
            <person name="Alberti S."/>
            <person name="Wessels M.R."/>
        </authorList>
    </citation>
    <scope>NUCLEOTIDE SEQUENCE [GENOMIC DNA]</scope>
    <source>
        <strain>282</strain>
    </source>
</reference>
<organism>
    <name type="scientific">Streptococcus pyogenes</name>
    <dbReference type="NCBI Taxonomy" id="1314"/>
    <lineage>
        <taxon>Bacteria</taxon>
        <taxon>Bacillati</taxon>
        <taxon>Bacillota</taxon>
        <taxon>Bacilli</taxon>
        <taxon>Lactobacillales</taxon>
        <taxon>Streptococcaceae</taxon>
        <taxon>Streptococcus</taxon>
    </lineage>
</organism>
<sequence length="279" mass="31113">MSAIIELKKVTFNYHKDQEKPTLDGVSFHVKQGEWLSIIGHNGSGKSTTIRLIDGLLEPESGSIIVDGDLLTITNVWEIRHKIGMVFQNPDNQFVGATVEDDVAFGLENKGIAHEDIKERVNHALELVGMQNFKEKEPARLSGGQKQRVAIAGAVAMKPKIIILDEATSMLDPKGRLELIKTIKNIRDDYQLTVISITHDLDEVALSDRVLVMKDGQVESTSTPEQLFARGDELLQLGLDIPFTTSVVQMLQEEGYPIDYGYLTEKELENQLCQLISKM</sequence>
<evidence type="ECO:0000255" key="1">
    <source>
        <dbReference type="HAMAP-Rule" id="MF_01710"/>
    </source>
</evidence>
<evidence type="ECO:0000305" key="2"/>
<protein>
    <recommendedName>
        <fullName evidence="1">Energy-coupling factor transporter ATP-binding protein EcfA</fullName>
        <shortName evidence="1">ECF transporter A component EcfA</shortName>
        <ecNumber evidence="1">7.-.-.-</ecNumber>
    </recommendedName>
</protein>
<gene>
    <name evidence="1" type="primary">ecfA</name>
    <name type="synonym">cbiO</name>
    <name type="synonym">stpA</name>
</gene>
<keyword id="KW-0067">ATP-binding</keyword>
<keyword id="KW-1003">Cell membrane</keyword>
<keyword id="KW-0472">Membrane</keyword>
<keyword id="KW-0547">Nucleotide-binding</keyword>
<keyword id="KW-1278">Translocase</keyword>
<keyword id="KW-0813">Transport</keyword>
<name>ECFA_STRPY</name>
<accession>P0C0E9</accession>
<accession>O87533</accession>
<accession>Q99XI1</accession>
<dbReference type="EC" id="7.-.-.-" evidence="1"/>
<dbReference type="EMBL" id="AF082738">
    <property type="protein sequence ID" value="AAC61484.1"/>
    <property type="status" value="ALT_INIT"/>
    <property type="molecule type" value="Genomic_DNA"/>
</dbReference>
<dbReference type="RefSeq" id="WP_002992388.1">
    <property type="nucleotide sequence ID" value="NZ_WXZI01000010.1"/>
</dbReference>
<dbReference type="SMR" id="P0C0E9"/>
<dbReference type="STRING" id="1314.SD89_09570"/>
<dbReference type="PATRIC" id="fig|1314.168.peg.1021"/>
<dbReference type="eggNOG" id="COG1122">
    <property type="taxonomic scope" value="Bacteria"/>
</dbReference>
<dbReference type="GO" id="GO:0043190">
    <property type="term" value="C:ATP-binding cassette (ABC) transporter complex"/>
    <property type="evidence" value="ECO:0007669"/>
    <property type="project" value="TreeGrafter"/>
</dbReference>
<dbReference type="GO" id="GO:0005524">
    <property type="term" value="F:ATP binding"/>
    <property type="evidence" value="ECO:0007669"/>
    <property type="project" value="UniProtKB-KW"/>
</dbReference>
<dbReference type="GO" id="GO:0016887">
    <property type="term" value="F:ATP hydrolysis activity"/>
    <property type="evidence" value="ECO:0007669"/>
    <property type="project" value="InterPro"/>
</dbReference>
<dbReference type="GO" id="GO:0042626">
    <property type="term" value="F:ATPase-coupled transmembrane transporter activity"/>
    <property type="evidence" value="ECO:0007669"/>
    <property type="project" value="TreeGrafter"/>
</dbReference>
<dbReference type="CDD" id="cd03225">
    <property type="entry name" value="ABC_cobalt_CbiO_domain1"/>
    <property type="match status" value="1"/>
</dbReference>
<dbReference type="FunFam" id="3.40.50.300:FF:000224">
    <property type="entry name" value="Energy-coupling factor transporter ATP-binding protein EcfA"/>
    <property type="match status" value="1"/>
</dbReference>
<dbReference type="Gene3D" id="3.40.50.300">
    <property type="entry name" value="P-loop containing nucleotide triphosphate hydrolases"/>
    <property type="match status" value="1"/>
</dbReference>
<dbReference type="InterPro" id="IPR003593">
    <property type="entry name" value="AAA+_ATPase"/>
</dbReference>
<dbReference type="InterPro" id="IPR003439">
    <property type="entry name" value="ABC_transporter-like_ATP-bd"/>
</dbReference>
<dbReference type="InterPro" id="IPR017871">
    <property type="entry name" value="ABC_transporter-like_CS"/>
</dbReference>
<dbReference type="InterPro" id="IPR015856">
    <property type="entry name" value="ABC_transpr_CbiO/EcfA_su"/>
</dbReference>
<dbReference type="InterPro" id="IPR050095">
    <property type="entry name" value="ECF_ABC_transporter_ATP-bd"/>
</dbReference>
<dbReference type="InterPro" id="IPR030947">
    <property type="entry name" value="EcfA_1"/>
</dbReference>
<dbReference type="InterPro" id="IPR027417">
    <property type="entry name" value="P-loop_NTPase"/>
</dbReference>
<dbReference type="NCBIfam" id="TIGR04520">
    <property type="entry name" value="ECF_ATPase_1"/>
    <property type="match status" value="1"/>
</dbReference>
<dbReference type="NCBIfam" id="NF010156">
    <property type="entry name" value="PRK13635.1"/>
    <property type="match status" value="1"/>
</dbReference>
<dbReference type="NCBIfam" id="NF010167">
    <property type="entry name" value="PRK13648.1"/>
    <property type="match status" value="1"/>
</dbReference>
<dbReference type="PANTHER" id="PTHR43553:SF24">
    <property type="entry name" value="ENERGY-COUPLING FACTOR TRANSPORTER ATP-BINDING PROTEIN ECFA1"/>
    <property type="match status" value="1"/>
</dbReference>
<dbReference type="PANTHER" id="PTHR43553">
    <property type="entry name" value="HEAVY METAL TRANSPORTER"/>
    <property type="match status" value="1"/>
</dbReference>
<dbReference type="Pfam" id="PF00005">
    <property type="entry name" value="ABC_tran"/>
    <property type="match status" value="1"/>
</dbReference>
<dbReference type="SMART" id="SM00382">
    <property type="entry name" value="AAA"/>
    <property type="match status" value="1"/>
</dbReference>
<dbReference type="SUPFAM" id="SSF52540">
    <property type="entry name" value="P-loop containing nucleoside triphosphate hydrolases"/>
    <property type="match status" value="1"/>
</dbReference>
<dbReference type="PROSITE" id="PS00211">
    <property type="entry name" value="ABC_TRANSPORTER_1"/>
    <property type="match status" value="1"/>
</dbReference>
<dbReference type="PROSITE" id="PS50893">
    <property type="entry name" value="ABC_TRANSPORTER_2"/>
    <property type="match status" value="1"/>
</dbReference>
<dbReference type="PROSITE" id="PS51246">
    <property type="entry name" value="CBIO"/>
    <property type="match status" value="1"/>
</dbReference>
<comment type="function">
    <text evidence="1">ATP-binding (A) component of a common energy-coupling factor (ECF) ABC-transporter complex. Unlike classic ABC transporters this ECF transporter provides the energy necessary to transport a number of different substrates.</text>
</comment>
<comment type="subunit">
    <text evidence="1">Forms a stable energy-coupling factor (ECF) transporter complex composed of 2 membrane-embedded substrate-binding proteins (S component), 2 ATP-binding proteins (A component) and 2 transmembrane proteins (T component).</text>
</comment>
<comment type="subcellular location">
    <subcellularLocation>
        <location evidence="1">Cell membrane</location>
        <topology evidence="1">Peripheral membrane protein</topology>
    </subcellularLocation>
</comment>
<comment type="similarity">
    <text evidence="1">Belongs to the ABC transporter superfamily. Energy-coupling factor EcfA family.</text>
</comment>
<comment type="sequence caution" evidence="2">
    <conflict type="erroneous initiation">
        <sequence resource="EMBL-CDS" id="AAC61484"/>
    </conflict>
    <text>Extended N-terminus.</text>
</comment>